<dbReference type="EMBL" id="AF022731">
    <property type="protein sequence ID" value="AAB82134.1"/>
    <property type="status" value="ALT_SEQ"/>
    <property type="molecule type" value="mRNA"/>
</dbReference>
<dbReference type="EMBL" id="CM000135">
    <property type="protein sequence ID" value="EAY79202.1"/>
    <property type="molecule type" value="Genomic_DNA"/>
</dbReference>
<dbReference type="PIR" id="T02072">
    <property type="entry name" value="T02072"/>
</dbReference>
<dbReference type="SMR" id="A2Z9B8"/>
<dbReference type="STRING" id="39946.A2Z9B8"/>
<dbReference type="EnsemblPlants" id="BGIOSGA033278-TA">
    <property type="protein sequence ID" value="BGIOSGA033278-PA"/>
    <property type="gene ID" value="BGIOSGA033278"/>
</dbReference>
<dbReference type="Gramene" id="BGIOSGA033278-TA">
    <property type="protein sequence ID" value="BGIOSGA033278-PA"/>
    <property type="gene ID" value="BGIOSGA033278"/>
</dbReference>
<dbReference type="HOGENOM" id="CLU_097408_1_0_1"/>
<dbReference type="OMA" id="KEHEWIR"/>
<dbReference type="Proteomes" id="UP000007015">
    <property type="component" value="Chromosome 10"/>
</dbReference>
<dbReference type="GO" id="GO:0005960">
    <property type="term" value="C:glycine cleavage complex"/>
    <property type="evidence" value="ECO:0007669"/>
    <property type="project" value="InterPro"/>
</dbReference>
<dbReference type="GO" id="GO:0005739">
    <property type="term" value="C:mitochondrion"/>
    <property type="evidence" value="ECO:0007669"/>
    <property type="project" value="UniProtKB-SubCell"/>
</dbReference>
<dbReference type="GO" id="GO:0019464">
    <property type="term" value="P:glycine decarboxylation via glycine cleavage system"/>
    <property type="evidence" value="ECO:0007669"/>
    <property type="project" value="InterPro"/>
</dbReference>
<dbReference type="CDD" id="cd06848">
    <property type="entry name" value="GCS_H"/>
    <property type="match status" value="1"/>
</dbReference>
<dbReference type="FunFam" id="2.40.50.100:FF:000011">
    <property type="entry name" value="Glycine cleavage system H protein"/>
    <property type="match status" value="1"/>
</dbReference>
<dbReference type="Gene3D" id="2.40.50.100">
    <property type="match status" value="1"/>
</dbReference>
<dbReference type="HAMAP" id="MF_00272">
    <property type="entry name" value="GcvH"/>
    <property type="match status" value="1"/>
</dbReference>
<dbReference type="InterPro" id="IPR003016">
    <property type="entry name" value="2-oxoA_DH_lipoyl-BS"/>
</dbReference>
<dbReference type="InterPro" id="IPR000089">
    <property type="entry name" value="Biotin_lipoyl"/>
</dbReference>
<dbReference type="InterPro" id="IPR002930">
    <property type="entry name" value="GCV_H"/>
</dbReference>
<dbReference type="InterPro" id="IPR033753">
    <property type="entry name" value="GCV_H/Fam206"/>
</dbReference>
<dbReference type="InterPro" id="IPR017453">
    <property type="entry name" value="GCV_H_sub"/>
</dbReference>
<dbReference type="InterPro" id="IPR011053">
    <property type="entry name" value="Single_hybrid_motif"/>
</dbReference>
<dbReference type="NCBIfam" id="TIGR00527">
    <property type="entry name" value="gcvH"/>
    <property type="match status" value="1"/>
</dbReference>
<dbReference type="NCBIfam" id="NF002270">
    <property type="entry name" value="PRK01202.1"/>
    <property type="match status" value="1"/>
</dbReference>
<dbReference type="PANTHER" id="PTHR11715">
    <property type="entry name" value="GLYCINE CLEAVAGE SYSTEM H PROTEIN"/>
    <property type="match status" value="1"/>
</dbReference>
<dbReference type="PANTHER" id="PTHR11715:SF27">
    <property type="entry name" value="GLYCINE CLEAVAGE SYSTEM H PROTEIN 1, MITOCHONDRIAL-RELATED"/>
    <property type="match status" value="1"/>
</dbReference>
<dbReference type="Pfam" id="PF01597">
    <property type="entry name" value="GCV_H"/>
    <property type="match status" value="1"/>
</dbReference>
<dbReference type="SUPFAM" id="SSF51230">
    <property type="entry name" value="Single hybrid motif"/>
    <property type="match status" value="1"/>
</dbReference>
<dbReference type="PROSITE" id="PS50968">
    <property type="entry name" value="BIOTINYL_LIPOYL"/>
    <property type="match status" value="1"/>
</dbReference>
<dbReference type="PROSITE" id="PS00189">
    <property type="entry name" value="LIPOYL"/>
    <property type="match status" value="1"/>
</dbReference>
<accession>A2Z9B8</accession>
<accession>O22535</accession>
<accession>Q0IWE1</accession>
<accession>Q7XCT9</accession>
<accession>Q94HZ9</accession>
<accession>Q9FW99</accession>
<evidence type="ECO:0000250" key="1"/>
<evidence type="ECO:0000255" key="2"/>
<evidence type="ECO:0000255" key="3">
    <source>
        <dbReference type="PROSITE-ProRule" id="PRU01066"/>
    </source>
</evidence>
<evidence type="ECO:0000305" key="4"/>
<reference key="1">
    <citation type="submission" date="1997-09" db="EMBL/GenBank/DDBJ databases">
        <title>Isolation and characterization of H protein from rice.</title>
        <authorList>
            <person name="Lee M.C."/>
            <person name="Kim C.S."/>
            <person name="Eun M.Y."/>
        </authorList>
    </citation>
    <scope>NUCLEOTIDE SEQUENCE [MRNA]</scope>
    <source>
        <strain>cv. Milyang 23</strain>
        <tissue>Seed</tissue>
    </source>
</reference>
<reference key="2">
    <citation type="journal article" date="2005" name="PLoS Biol.">
        <title>The genomes of Oryza sativa: a history of duplications.</title>
        <authorList>
            <person name="Yu J."/>
            <person name="Wang J."/>
            <person name="Lin W."/>
            <person name="Li S."/>
            <person name="Li H."/>
            <person name="Zhou J."/>
            <person name="Ni P."/>
            <person name="Dong W."/>
            <person name="Hu S."/>
            <person name="Zeng C."/>
            <person name="Zhang J."/>
            <person name="Zhang Y."/>
            <person name="Li R."/>
            <person name="Xu Z."/>
            <person name="Li S."/>
            <person name="Li X."/>
            <person name="Zheng H."/>
            <person name="Cong L."/>
            <person name="Lin L."/>
            <person name="Yin J."/>
            <person name="Geng J."/>
            <person name="Li G."/>
            <person name="Shi J."/>
            <person name="Liu J."/>
            <person name="Lv H."/>
            <person name="Li J."/>
            <person name="Wang J."/>
            <person name="Deng Y."/>
            <person name="Ran L."/>
            <person name="Shi X."/>
            <person name="Wang X."/>
            <person name="Wu Q."/>
            <person name="Li C."/>
            <person name="Ren X."/>
            <person name="Wang J."/>
            <person name="Wang X."/>
            <person name="Li D."/>
            <person name="Liu D."/>
            <person name="Zhang X."/>
            <person name="Ji Z."/>
            <person name="Zhao W."/>
            <person name="Sun Y."/>
            <person name="Zhang Z."/>
            <person name="Bao J."/>
            <person name="Han Y."/>
            <person name="Dong L."/>
            <person name="Ji J."/>
            <person name="Chen P."/>
            <person name="Wu S."/>
            <person name="Liu J."/>
            <person name="Xiao Y."/>
            <person name="Bu D."/>
            <person name="Tan J."/>
            <person name="Yang L."/>
            <person name="Ye C."/>
            <person name="Zhang J."/>
            <person name="Xu J."/>
            <person name="Zhou Y."/>
            <person name="Yu Y."/>
            <person name="Zhang B."/>
            <person name="Zhuang S."/>
            <person name="Wei H."/>
            <person name="Liu B."/>
            <person name="Lei M."/>
            <person name="Yu H."/>
            <person name="Li Y."/>
            <person name="Xu H."/>
            <person name="Wei S."/>
            <person name="He X."/>
            <person name="Fang L."/>
            <person name="Zhang Z."/>
            <person name="Zhang Y."/>
            <person name="Huang X."/>
            <person name="Su Z."/>
            <person name="Tong W."/>
            <person name="Li J."/>
            <person name="Tong Z."/>
            <person name="Li S."/>
            <person name="Ye J."/>
            <person name="Wang L."/>
            <person name="Fang L."/>
            <person name="Lei T."/>
            <person name="Chen C.-S."/>
            <person name="Chen H.-C."/>
            <person name="Xu Z."/>
            <person name="Li H."/>
            <person name="Huang H."/>
            <person name="Zhang F."/>
            <person name="Xu H."/>
            <person name="Li N."/>
            <person name="Zhao C."/>
            <person name="Li S."/>
            <person name="Dong L."/>
            <person name="Huang Y."/>
            <person name="Li L."/>
            <person name="Xi Y."/>
            <person name="Qi Q."/>
            <person name="Li W."/>
            <person name="Zhang B."/>
            <person name="Hu W."/>
            <person name="Zhang Y."/>
            <person name="Tian X."/>
            <person name="Jiao Y."/>
            <person name="Liang X."/>
            <person name="Jin J."/>
            <person name="Gao L."/>
            <person name="Zheng W."/>
            <person name="Hao B."/>
            <person name="Liu S.-M."/>
            <person name="Wang W."/>
            <person name="Yuan L."/>
            <person name="Cao M."/>
            <person name="McDermott J."/>
            <person name="Samudrala R."/>
            <person name="Wang J."/>
            <person name="Wong G.K.-S."/>
            <person name="Yang H."/>
        </authorList>
    </citation>
    <scope>NUCLEOTIDE SEQUENCE [LARGE SCALE GENOMIC DNA]</scope>
    <source>
        <strain>cv. 93-11</strain>
    </source>
</reference>
<sequence length="164" mass="17367">MALRLWASSAANALKISCSGATRAAPAYSISRYFSTVLDGLKYSSSHEWVKNDGSVATIGITDHAQGHLGEVVFVELPEAGAKVSQGGAFGNVESVKATSDINSPISGEVVEVNDKLSETPGLINSSPYEDGWMIKVKPSSPSELDALLDPAKYTKHCEEEDAH</sequence>
<gene>
    <name type="primary">GDCSH</name>
    <name type="ORF">OsI_033161</name>
</gene>
<keyword id="KW-0450">Lipoyl</keyword>
<keyword id="KW-0496">Mitochondrion</keyword>
<keyword id="KW-1185">Reference proteome</keyword>
<keyword id="KW-0809">Transit peptide</keyword>
<comment type="function">
    <text evidence="1">The glycine cleavage system catalyzes the degradation of glycine. The H protein shuttles the methylamine group of glycine from the P protein to the T protein (By similarity).</text>
</comment>
<comment type="cofactor">
    <cofactor evidence="1">
        <name>(R)-lipoate</name>
        <dbReference type="ChEBI" id="CHEBI:83088"/>
    </cofactor>
    <text evidence="1">Binds 1 lipoyl cofactor covalently.</text>
</comment>
<comment type="subunit">
    <text evidence="1">The glycine cleavage system is composed of four proteins: P, T, L and H.</text>
</comment>
<comment type="subcellular location">
    <subcellularLocation>
        <location evidence="1">Mitochondrion</location>
    </subcellularLocation>
</comment>
<comment type="similarity">
    <text evidence="4">Belongs to the GcvH family.</text>
</comment>
<comment type="sequence caution" evidence="4">
    <conflict type="frameshift">
        <sequence resource="EMBL-CDS" id="AAB82134"/>
    </conflict>
</comment>
<comment type="sequence caution" evidence="4">
    <conflict type="miscellaneous discrepancy">
        <sequence resource="EMBL-CDS" id="AAB82134"/>
    </conflict>
    <text>Sequencing errors.</text>
</comment>
<protein>
    <recommendedName>
        <fullName>Glycine cleavage system H protein, mitochondrial</fullName>
    </recommendedName>
</protein>
<feature type="transit peptide" description="Mitochondrion" evidence="2">
    <location>
        <begin position="1"/>
        <end position="34"/>
    </location>
</feature>
<feature type="chain" id="PRO_0000295027" description="Glycine cleavage system H protein, mitochondrial">
    <location>
        <begin position="35"/>
        <end position="164"/>
    </location>
</feature>
<feature type="domain" description="Lipoyl-binding" evidence="3">
    <location>
        <begin position="56"/>
        <end position="138"/>
    </location>
</feature>
<feature type="modified residue" description="N6-lipoyllysine" evidence="1 3">
    <location>
        <position position="97"/>
    </location>
</feature>
<proteinExistence type="evidence at transcript level"/>
<organism>
    <name type="scientific">Oryza sativa subsp. indica</name>
    <name type="common">Rice</name>
    <dbReference type="NCBI Taxonomy" id="39946"/>
    <lineage>
        <taxon>Eukaryota</taxon>
        <taxon>Viridiplantae</taxon>
        <taxon>Streptophyta</taxon>
        <taxon>Embryophyta</taxon>
        <taxon>Tracheophyta</taxon>
        <taxon>Spermatophyta</taxon>
        <taxon>Magnoliopsida</taxon>
        <taxon>Liliopsida</taxon>
        <taxon>Poales</taxon>
        <taxon>Poaceae</taxon>
        <taxon>BOP clade</taxon>
        <taxon>Oryzoideae</taxon>
        <taxon>Oryzeae</taxon>
        <taxon>Oryzinae</taxon>
        <taxon>Oryza</taxon>
        <taxon>Oryza sativa</taxon>
    </lineage>
</organism>
<name>GCSH_ORYSI</name>